<keyword id="KW-1003">Cell membrane</keyword>
<keyword id="KW-0333">Golgi apparatus</keyword>
<keyword id="KW-0472">Membrane</keyword>
<keyword id="KW-0539">Nucleus</keyword>
<keyword id="KW-1267">Proteomics identification</keyword>
<keyword id="KW-1185">Reference proteome</keyword>
<keyword id="KW-0804">Transcription</keyword>
<keyword id="KW-0805">Transcription regulation</keyword>
<dbReference type="EMBL" id="X82877">
    <property type="protein sequence ID" value="CAA58058.1"/>
    <property type="molecule type" value="Genomic_DNA"/>
</dbReference>
<dbReference type="EMBL" id="AK314753">
    <property type="protein sequence ID" value="BAG37292.1"/>
    <property type="molecule type" value="mRNA"/>
</dbReference>
<dbReference type="EMBL" id="AL121992">
    <property type="status" value="NOT_ANNOTATED_CDS"/>
    <property type="molecule type" value="Genomic_DNA"/>
</dbReference>
<dbReference type="EMBL" id="CH471167">
    <property type="protein sequence ID" value="EAW51744.1"/>
    <property type="molecule type" value="Genomic_DNA"/>
</dbReference>
<dbReference type="CCDS" id="CCDS161.1"/>
<dbReference type="RefSeq" id="NP_006502.1">
    <property type="nucleotide sequence ID" value="NM_006511.3"/>
</dbReference>
<dbReference type="SMR" id="Q92681"/>
<dbReference type="BioGRID" id="112162">
    <property type="interactions" value="12"/>
</dbReference>
<dbReference type="FunCoup" id="Q92681">
    <property type="interactions" value="8"/>
</dbReference>
<dbReference type="IntAct" id="Q92681">
    <property type="interactions" value="4"/>
</dbReference>
<dbReference type="STRING" id="9606.ENSP00000341963"/>
<dbReference type="iPTMnet" id="Q92681"/>
<dbReference type="PhosphoSitePlus" id="Q92681"/>
<dbReference type="BioMuta" id="RSC1A1"/>
<dbReference type="DMDM" id="74751656"/>
<dbReference type="MassIVE" id="Q92681"/>
<dbReference type="PaxDb" id="9606-ENSP00000341963"/>
<dbReference type="PeptideAtlas" id="Q92681"/>
<dbReference type="ProteomicsDB" id="75405"/>
<dbReference type="Antibodypedia" id="28940">
    <property type="antibodies" value="48 antibodies from 16 providers"/>
</dbReference>
<dbReference type="DNASU" id="6248"/>
<dbReference type="Ensembl" id="ENST00000345034.2">
    <property type="protein sequence ID" value="ENSP00000341963.1"/>
    <property type="gene ID" value="ENSG00000215695.2"/>
</dbReference>
<dbReference type="GeneID" id="6248"/>
<dbReference type="KEGG" id="hsa:6248"/>
<dbReference type="MANE-Select" id="ENST00000345034.2">
    <property type="protein sequence ID" value="ENSP00000341963.1"/>
    <property type="RefSeq nucleotide sequence ID" value="NM_006511.3"/>
    <property type="RefSeq protein sequence ID" value="NP_006502.1"/>
</dbReference>
<dbReference type="UCSC" id="uc010obn.2">
    <property type="organism name" value="human"/>
</dbReference>
<dbReference type="AGR" id="HGNC:10458"/>
<dbReference type="CTD" id="6248"/>
<dbReference type="DisGeNET" id="6248"/>
<dbReference type="GeneCards" id="RSC1A1"/>
<dbReference type="HGNC" id="HGNC:10458">
    <property type="gene designation" value="RSC1A1"/>
</dbReference>
<dbReference type="HPA" id="ENSG00000215695">
    <property type="expression patterns" value="Low tissue specificity"/>
</dbReference>
<dbReference type="MIM" id="601966">
    <property type="type" value="gene"/>
</dbReference>
<dbReference type="neXtProt" id="NX_Q92681"/>
<dbReference type="OpenTargets" id="ENSG00000215695"/>
<dbReference type="PharmGKB" id="PA34872"/>
<dbReference type="VEuPathDB" id="HostDB:ENSG00000215695"/>
<dbReference type="eggNOG" id="KOG0012">
    <property type="taxonomic scope" value="Eukaryota"/>
</dbReference>
<dbReference type="GeneTree" id="ENSGT00390000005744"/>
<dbReference type="HOGENOM" id="CLU_032729_0_0_1"/>
<dbReference type="InParanoid" id="Q92681"/>
<dbReference type="OMA" id="SPEHQIT"/>
<dbReference type="OrthoDB" id="1047367at2759"/>
<dbReference type="PAN-GO" id="Q92681">
    <property type="GO annotations" value="1 GO annotation based on evolutionary models"/>
</dbReference>
<dbReference type="PhylomeDB" id="Q92681"/>
<dbReference type="TreeFam" id="TF335675"/>
<dbReference type="PathwayCommons" id="Q92681"/>
<dbReference type="Reactome" id="R-HSA-549127">
    <property type="pathway name" value="Organic cation transport"/>
</dbReference>
<dbReference type="Reactome" id="R-HSA-8981373">
    <property type="pathway name" value="Intestinal hexose absorption"/>
</dbReference>
<dbReference type="SignaLink" id="Q92681"/>
<dbReference type="BioGRID-ORCS" id="6248">
    <property type="hits" value="13 hits in 1083 CRISPR screens"/>
</dbReference>
<dbReference type="ChiTaRS" id="RSC1A1">
    <property type="organism name" value="human"/>
</dbReference>
<dbReference type="GenomeRNAi" id="6248"/>
<dbReference type="Pharos" id="Q92681">
    <property type="development level" value="Tbio"/>
</dbReference>
<dbReference type="PRO" id="PR:Q92681"/>
<dbReference type="Proteomes" id="UP000005640">
    <property type="component" value="Chromosome 1"/>
</dbReference>
<dbReference type="RNAct" id="Q92681">
    <property type="molecule type" value="protein"/>
</dbReference>
<dbReference type="Bgee" id="ENSG00000215695">
    <property type="expression patterns" value="Expressed in male germ line stem cell (sensu Vertebrata) in testis and 95 other cell types or tissues"/>
</dbReference>
<dbReference type="GO" id="GO:0030054">
    <property type="term" value="C:cell junction"/>
    <property type="evidence" value="ECO:0000314"/>
    <property type="project" value="HPA"/>
</dbReference>
<dbReference type="GO" id="GO:0005794">
    <property type="term" value="C:Golgi apparatus"/>
    <property type="evidence" value="ECO:0007669"/>
    <property type="project" value="UniProtKB-SubCell"/>
</dbReference>
<dbReference type="GO" id="GO:0005654">
    <property type="term" value="C:nucleoplasm"/>
    <property type="evidence" value="ECO:0000314"/>
    <property type="project" value="HPA"/>
</dbReference>
<dbReference type="GO" id="GO:0005886">
    <property type="term" value="C:plasma membrane"/>
    <property type="evidence" value="ECO:0007669"/>
    <property type="project" value="UniProtKB-SubCell"/>
</dbReference>
<dbReference type="GO" id="GO:0019871">
    <property type="term" value="F:sodium channel inhibitor activity"/>
    <property type="evidence" value="ECO:0000314"/>
    <property type="project" value="UniProtKB"/>
</dbReference>
<dbReference type="GO" id="GO:0010829">
    <property type="term" value="P:negative regulation of D-glucose transmembrane transport"/>
    <property type="evidence" value="ECO:0000314"/>
    <property type="project" value="UniProtKB"/>
</dbReference>
<dbReference type="GO" id="GO:0042997">
    <property type="term" value="P:negative regulation of Golgi to plasma membrane protein transport"/>
    <property type="evidence" value="ECO:0000314"/>
    <property type="project" value="ARUK-UCL"/>
</dbReference>
<dbReference type="GO" id="GO:0032243">
    <property type="term" value="P:negative regulation of nucleoside transport"/>
    <property type="evidence" value="ECO:0000314"/>
    <property type="project" value="ARUK-UCL"/>
</dbReference>
<dbReference type="GO" id="GO:1903077">
    <property type="term" value="P:negative regulation of protein localization to plasma membrane"/>
    <property type="evidence" value="ECO:0000250"/>
    <property type="project" value="ARUK-UCL"/>
</dbReference>
<dbReference type="GO" id="GO:0051051">
    <property type="term" value="P:negative regulation of transport"/>
    <property type="evidence" value="ECO:0000314"/>
    <property type="project" value="MGI"/>
</dbReference>
<dbReference type="InterPro" id="IPR015940">
    <property type="entry name" value="UBA"/>
</dbReference>
<dbReference type="PANTHER" id="PTHR15397:SF3">
    <property type="entry name" value="DNA DAMAGE INDUCIBLE 1 HOMOLOG 2"/>
    <property type="match status" value="1"/>
</dbReference>
<dbReference type="PANTHER" id="PTHR15397">
    <property type="entry name" value="SODIUM-GLUCOSE COTRANSPORTER REGULATORY PROTEIN -RELATED"/>
    <property type="match status" value="1"/>
</dbReference>
<dbReference type="SMART" id="SM00165">
    <property type="entry name" value="UBA"/>
    <property type="match status" value="1"/>
</dbReference>
<dbReference type="PROSITE" id="PS50030">
    <property type="entry name" value="UBA"/>
    <property type="match status" value="1"/>
</dbReference>
<reference key="1">
    <citation type="journal article" date="1996" name="DNA Cell Biol.">
        <title>The human gene of a protein that modifies Na(+)-D-glucose co-transport.</title>
        <authorList>
            <person name="Lambotte S."/>
            <person name="Veyhl M."/>
            <person name="Koehler M."/>
            <person name="Morrison-Shetlar A.I."/>
            <person name="Kinne R.K.H."/>
            <person name="Schmid M."/>
            <person name="Koepsell H."/>
        </authorList>
    </citation>
    <scope>NUCLEOTIDE SEQUENCE [MRNA]</scope>
    <scope>FUNCTION</scope>
    <scope>TISSUE SPECIFICITY</scope>
</reference>
<reference key="2">
    <citation type="journal article" date="2004" name="Nat. Genet.">
        <title>Complete sequencing and characterization of 21,243 full-length human cDNAs.</title>
        <authorList>
            <person name="Ota T."/>
            <person name="Suzuki Y."/>
            <person name="Nishikawa T."/>
            <person name="Otsuki T."/>
            <person name="Sugiyama T."/>
            <person name="Irie R."/>
            <person name="Wakamatsu A."/>
            <person name="Hayashi K."/>
            <person name="Sato H."/>
            <person name="Nagai K."/>
            <person name="Kimura K."/>
            <person name="Makita H."/>
            <person name="Sekine M."/>
            <person name="Obayashi M."/>
            <person name="Nishi T."/>
            <person name="Shibahara T."/>
            <person name="Tanaka T."/>
            <person name="Ishii S."/>
            <person name="Yamamoto J."/>
            <person name="Saito K."/>
            <person name="Kawai Y."/>
            <person name="Isono Y."/>
            <person name="Nakamura Y."/>
            <person name="Nagahari K."/>
            <person name="Murakami K."/>
            <person name="Yasuda T."/>
            <person name="Iwayanagi T."/>
            <person name="Wagatsuma M."/>
            <person name="Shiratori A."/>
            <person name="Sudo H."/>
            <person name="Hosoiri T."/>
            <person name="Kaku Y."/>
            <person name="Kodaira H."/>
            <person name="Kondo H."/>
            <person name="Sugawara M."/>
            <person name="Takahashi M."/>
            <person name="Kanda K."/>
            <person name="Yokoi T."/>
            <person name="Furuya T."/>
            <person name="Kikkawa E."/>
            <person name="Omura Y."/>
            <person name="Abe K."/>
            <person name="Kamihara K."/>
            <person name="Katsuta N."/>
            <person name="Sato K."/>
            <person name="Tanikawa M."/>
            <person name="Yamazaki M."/>
            <person name="Ninomiya K."/>
            <person name="Ishibashi T."/>
            <person name="Yamashita H."/>
            <person name="Murakawa K."/>
            <person name="Fujimori K."/>
            <person name="Tanai H."/>
            <person name="Kimata M."/>
            <person name="Watanabe M."/>
            <person name="Hiraoka S."/>
            <person name="Chiba Y."/>
            <person name="Ishida S."/>
            <person name="Ono Y."/>
            <person name="Takiguchi S."/>
            <person name="Watanabe S."/>
            <person name="Yosida M."/>
            <person name="Hotuta T."/>
            <person name="Kusano J."/>
            <person name="Kanehori K."/>
            <person name="Takahashi-Fujii A."/>
            <person name="Hara H."/>
            <person name="Tanase T.-O."/>
            <person name="Nomura Y."/>
            <person name="Togiya S."/>
            <person name="Komai F."/>
            <person name="Hara R."/>
            <person name="Takeuchi K."/>
            <person name="Arita M."/>
            <person name="Imose N."/>
            <person name="Musashino K."/>
            <person name="Yuuki H."/>
            <person name="Oshima A."/>
            <person name="Sasaki N."/>
            <person name="Aotsuka S."/>
            <person name="Yoshikawa Y."/>
            <person name="Matsunawa H."/>
            <person name="Ichihara T."/>
            <person name="Shiohata N."/>
            <person name="Sano S."/>
            <person name="Moriya S."/>
            <person name="Momiyama H."/>
            <person name="Satoh N."/>
            <person name="Takami S."/>
            <person name="Terashima Y."/>
            <person name="Suzuki O."/>
            <person name="Nakagawa S."/>
            <person name="Senoh A."/>
            <person name="Mizoguchi H."/>
            <person name="Goto Y."/>
            <person name="Shimizu F."/>
            <person name="Wakebe H."/>
            <person name="Hishigaki H."/>
            <person name="Watanabe T."/>
            <person name="Sugiyama A."/>
            <person name="Takemoto M."/>
            <person name="Kawakami B."/>
            <person name="Yamazaki M."/>
            <person name="Watanabe K."/>
            <person name="Kumagai A."/>
            <person name="Itakura S."/>
            <person name="Fukuzumi Y."/>
            <person name="Fujimori Y."/>
            <person name="Komiyama M."/>
            <person name="Tashiro H."/>
            <person name="Tanigami A."/>
            <person name="Fujiwara T."/>
            <person name="Ono T."/>
            <person name="Yamada K."/>
            <person name="Fujii Y."/>
            <person name="Ozaki K."/>
            <person name="Hirao M."/>
            <person name="Ohmori Y."/>
            <person name="Kawabata A."/>
            <person name="Hikiji T."/>
            <person name="Kobatake N."/>
            <person name="Inagaki H."/>
            <person name="Ikema Y."/>
            <person name="Okamoto S."/>
            <person name="Okitani R."/>
            <person name="Kawakami T."/>
            <person name="Noguchi S."/>
            <person name="Itoh T."/>
            <person name="Shigeta K."/>
            <person name="Senba T."/>
            <person name="Matsumura K."/>
            <person name="Nakajima Y."/>
            <person name="Mizuno T."/>
            <person name="Morinaga M."/>
            <person name="Sasaki M."/>
            <person name="Togashi T."/>
            <person name="Oyama M."/>
            <person name="Hata H."/>
            <person name="Watanabe M."/>
            <person name="Komatsu T."/>
            <person name="Mizushima-Sugano J."/>
            <person name="Satoh T."/>
            <person name="Shirai Y."/>
            <person name="Takahashi Y."/>
            <person name="Nakagawa K."/>
            <person name="Okumura K."/>
            <person name="Nagase T."/>
            <person name="Nomura N."/>
            <person name="Kikuchi H."/>
            <person name="Masuho Y."/>
            <person name="Yamashita R."/>
            <person name="Nakai K."/>
            <person name="Yada T."/>
            <person name="Nakamura Y."/>
            <person name="Ohara O."/>
            <person name="Isogai T."/>
            <person name="Sugano S."/>
        </authorList>
    </citation>
    <scope>NUCLEOTIDE SEQUENCE [LARGE SCALE MRNA]</scope>
    <scope>VARIANT LEU-62</scope>
    <source>
        <tissue>Hippocampus</tissue>
    </source>
</reference>
<reference key="3">
    <citation type="journal article" date="2006" name="Nature">
        <title>The DNA sequence and biological annotation of human chromosome 1.</title>
        <authorList>
            <person name="Gregory S.G."/>
            <person name="Barlow K.F."/>
            <person name="McLay K.E."/>
            <person name="Kaul R."/>
            <person name="Swarbreck D."/>
            <person name="Dunham A."/>
            <person name="Scott C.E."/>
            <person name="Howe K.L."/>
            <person name="Woodfine K."/>
            <person name="Spencer C.C.A."/>
            <person name="Jones M.C."/>
            <person name="Gillson C."/>
            <person name="Searle S."/>
            <person name="Zhou Y."/>
            <person name="Kokocinski F."/>
            <person name="McDonald L."/>
            <person name="Evans R."/>
            <person name="Phillips K."/>
            <person name="Atkinson A."/>
            <person name="Cooper R."/>
            <person name="Jones C."/>
            <person name="Hall R.E."/>
            <person name="Andrews T.D."/>
            <person name="Lloyd C."/>
            <person name="Ainscough R."/>
            <person name="Almeida J.P."/>
            <person name="Ambrose K.D."/>
            <person name="Anderson F."/>
            <person name="Andrew R.W."/>
            <person name="Ashwell R.I.S."/>
            <person name="Aubin K."/>
            <person name="Babbage A.K."/>
            <person name="Bagguley C.L."/>
            <person name="Bailey J."/>
            <person name="Beasley H."/>
            <person name="Bethel G."/>
            <person name="Bird C.P."/>
            <person name="Bray-Allen S."/>
            <person name="Brown J.Y."/>
            <person name="Brown A.J."/>
            <person name="Buckley D."/>
            <person name="Burton J."/>
            <person name="Bye J."/>
            <person name="Carder C."/>
            <person name="Chapman J.C."/>
            <person name="Clark S.Y."/>
            <person name="Clarke G."/>
            <person name="Clee C."/>
            <person name="Cobley V."/>
            <person name="Collier R.E."/>
            <person name="Corby N."/>
            <person name="Coville G.J."/>
            <person name="Davies J."/>
            <person name="Deadman R."/>
            <person name="Dunn M."/>
            <person name="Earthrowl M."/>
            <person name="Ellington A.G."/>
            <person name="Errington H."/>
            <person name="Frankish A."/>
            <person name="Frankland J."/>
            <person name="French L."/>
            <person name="Garner P."/>
            <person name="Garnett J."/>
            <person name="Gay L."/>
            <person name="Ghori M.R.J."/>
            <person name="Gibson R."/>
            <person name="Gilby L.M."/>
            <person name="Gillett W."/>
            <person name="Glithero R.J."/>
            <person name="Grafham D.V."/>
            <person name="Griffiths C."/>
            <person name="Griffiths-Jones S."/>
            <person name="Grocock R."/>
            <person name="Hammond S."/>
            <person name="Harrison E.S.I."/>
            <person name="Hart E."/>
            <person name="Haugen E."/>
            <person name="Heath P.D."/>
            <person name="Holmes S."/>
            <person name="Holt K."/>
            <person name="Howden P.J."/>
            <person name="Hunt A.R."/>
            <person name="Hunt S.E."/>
            <person name="Hunter G."/>
            <person name="Isherwood J."/>
            <person name="James R."/>
            <person name="Johnson C."/>
            <person name="Johnson D."/>
            <person name="Joy A."/>
            <person name="Kay M."/>
            <person name="Kershaw J.K."/>
            <person name="Kibukawa M."/>
            <person name="Kimberley A.M."/>
            <person name="King A."/>
            <person name="Knights A.J."/>
            <person name="Lad H."/>
            <person name="Laird G."/>
            <person name="Lawlor S."/>
            <person name="Leongamornlert D.A."/>
            <person name="Lloyd D.M."/>
            <person name="Loveland J."/>
            <person name="Lovell J."/>
            <person name="Lush M.J."/>
            <person name="Lyne R."/>
            <person name="Martin S."/>
            <person name="Mashreghi-Mohammadi M."/>
            <person name="Matthews L."/>
            <person name="Matthews N.S.W."/>
            <person name="McLaren S."/>
            <person name="Milne S."/>
            <person name="Mistry S."/>
            <person name="Moore M.J.F."/>
            <person name="Nickerson T."/>
            <person name="O'Dell C.N."/>
            <person name="Oliver K."/>
            <person name="Palmeiri A."/>
            <person name="Palmer S.A."/>
            <person name="Parker A."/>
            <person name="Patel D."/>
            <person name="Pearce A.V."/>
            <person name="Peck A.I."/>
            <person name="Pelan S."/>
            <person name="Phelps K."/>
            <person name="Phillimore B.J."/>
            <person name="Plumb R."/>
            <person name="Rajan J."/>
            <person name="Raymond C."/>
            <person name="Rouse G."/>
            <person name="Saenphimmachak C."/>
            <person name="Sehra H.K."/>
            <person name="Sheridan E."/>
            <person name="Shownkeen R."/>
            <person name="Sims S."/>
            <person name="Skuce C.D."/>
            <person name="Smith M."/>
            <person name="Steward C."/>
            <person name="Subramanian S."/>
            <person name="Sycamore N."/>
            <person name="Tracey A."/>
            <person name="Tromans A."/>
            <person name="Van Helmond Z."/>
            <person name="Wall M."/>
            <person name="Wallis J.M."/>
            <person name="White S."/>
            <person name="Whitehead S.L."/>
            <person name="Wilkinson J.E."/>
            <person name="Willey D.L."/>
            <person name="Williams H."/>
            <person name="Wilming L."/>
            <person name="Wray P.W."/>
            <person name="Wu Z."/>
            <person name="Coulson A."/>
            <person name="Vaudin M."/>
            <person name="Sulston J.E."/>
            <person name="Durbin R.M."/>
            <person name="Hubbard T."/>
            <person name="Wooster R."/>
            <person name="Dunham I."/>
            <person name="Carter N.P."/>
            <person name="McVean G."/>
            <person name="Ross M.T."/>
            <person name="Harrow J."/>
            <person name="Olson M.V."/>
            <person name="Beck S."/>
            <person name="Rogers J."/>
            <person name="Bentley D.R."/>
        </authorList>
    </citation>
    <scope>NUCLEOTIDE SEQUENCE [LARGE SCALE GENOMIC DNA]</scope>
</reference>
<reference key="4">
    <citation type="submission" date="2005-07" db="EMBL/GenBank/DDBJ databases">
        <authorList>
            <person name="Mural R.J."/>
            <person name="Istrail S."/>
            <person name="Sutton G.G."/>
            <person name="Florea L."/>
            <person name="Halpern A.L."/>
            <person name="Mobarry C.M."/>
            <person name="Lippert R."/>
            <person name="Walenz B."/>
            <person name="Shatkay H."/>
            <person name="Dew I."/>
            <person name="Miller J.R."/>
            <person name="Flanigan M.J."/>
            <person name="Edwards N.J."/>
            <person name="Bolanos R."/>
            <person name="Fasulo D."/>
            <person name="Halldorsson B.V."/>
            <person name="Hannenhalli S."/>
            <person name="Turner R."/>
            <person name="Yooseph S."/>
            <person name="Lu F."/>
            <person name="Nusskern D.R."/>
            <person name="Shue B.C."/>
            <person name="Zheng X.H."/>
            <person name="Zhong F."/>
            <person name="Delcher A.L."/>
            <person name="Huson D.H."/>
            <person name="Kravitz S.A."/>
            <person name="Mouchard L."/>
            <person name="Reinert K."/>
            <person name="Remington K.A."/>
            <person name="Clark A.G."/>
            <person name="Waterman M.S."/>
            <person name="Eichler E.E."/>
            <person name="Adams M.D."/>
            <person name="Hunkapiller M.W."/>
            <person name="Myers E.W."/>
            <person name="Venter J.C."/>
        </authorList>
    </citation>
    <scope>NUCLEOTIDE SEQUENCE [LARGE SCALE GENOMIC DNA]</scope>
</reference>
<reference key="5">
    <citation type="journal article" date="2003" name="J. Membr. Biol.">
        <title>Downregulation of the Na(+)- D-glucose cotransporter SGLT1 by protein RS1 (RSC1A1) is dependent on dynamin and protein kinase C.</title>
        <authorList>
            <person name="Veyhl M."/>
            <person name="Wagner C.A."/>
            <person name="Gorboulev V."/>
            <person name="Schmitt B.M."/>
            <person name="Lang F."/>
            <person name="Koepsell H."/>
        </authorList>
    </citation>
    <scope>FUNCTION</scope>
</reference>
<reference key="6">
    <citation type="journal article" date="2006" name="Am. J. Physiol.">
        <title>Transporter regulator RS1 (RSC1A1) coats the trans-Golgi network and migrates into the nucleus.</title>
        <authorList>
            <person name="Kroiss M."/>
            <person name="Leyerer M."/>
            <person name="Gorboulev V."/>
            <person name="Kuehlkamp T."/>
            <person name="Kipp H."/>
            <person name="Koepsell H."/>
        </authorList>
    </citation>
    <scope>SUBCELLULAR LOCATION</scope>
</reference>
<reference key="7">
    <citation type="journal article" date="2006" name="Am. J. Physiol.">
        <title>RS1 (RSC1A1) regulates the exocytotic pathway of Na+-D-glucose cotransporter SGLT1.</title>
        <authorList>
            <person name="Veyhl M."/>
            <person name="Keller T."/>
            <person name="Gorboulev V."/>
            <person name="Vernaleken A."/>
            <person name="Koepsell H."/>
        </authorList>
    </citation>
    <scope>FUNCTION</scope>
</reference>
<reference key="8">
    <citation type="journal article" date="2007" name="J. Biol. Chem.">
        <title>Tripeptides of RS1 (RSC1A1) inhibit a monosaccharide-dependent exocytotic pathway of Na+-D-glucose cotransporter SGLT1 with high affinity.</title>
        <authorList>
            <person name="Vernaleken A."/>
            <person name="Veyhl M."/>
            <person name="Gorboulev V."/>
            <person name="Kottra G."/>
            <person name="Palm D."/>
            <person name="Burckhardt B.-C."/>
            <person name="Burckhardt G."/>
            <person name="Pipkorn R."/>
            <person name="Beier N."/>
            <person name="van Amsterdam C."/>
            <person name="Koepsell H."/>
        </authorList>
    </citation>
    <scope>DOMAIN</scope>
</reference>
<accession>Q92681</accession>
<accession>B2RBP5</accession>
<gene>
    <name type="primary">RSC1A1</name>
</gene>
<sequence length="617" mass="66790">MSSLPTSDGFNHPARSSGQSPDVGNPMSLARSVSASVCPIKPSDSDRIEPKAVKALKASAEFQLNSEKKEHLSLQDLSDHASSADHAPTDQSPAMPMQNSSEEITVAGNLEKSAERSTQGLKFHLHTRQEASLSVTSTRMHEPQMFLGEKDWHPENQNLSQVSDPQQHEEPGNEQYEVAQQKASHDQEYLCNIGDLELPEERQQNQHKIVDLEATMKGNGLPQNVDPPSAKKSIPSSECSGCSNSETFMEIDTAQQSLVTLLNSTGRQNANVKNIGALDLTLDNPLMEVETSKCNPSSEILNDSISTQDLQPPETNVEIPGTNKEYGHYSSPSLCGSCQPSVESAEESCPSITAALKELHELLVVSSKPASENTSEEVICQSETIAEGQTSIKDLSERWTQNEHLTQNEQCPQVSFHQAISVSVETEKLTGTSSDTGREAVENVNFRSLGDGLSTDKEGVPKSRESINKNRSVTVTSAKTSNQLHCTLGVEISPKLLAGEEDALNQTSEQTKSLSSNFILVKDLGQGIQNSVTDRPETRENVCPDASRPLLEYEPPTSHPSSSPAILPPLIFPATDIDRILRAGFTLQEALGALHRVGGNADLALLVLLAKNIVVPT</sequence>
<evidence type="ECO:0000250" key="1"/>
<evidence type="ECO:0000255" key="2">
    <source>
        <dbReference type="PROSITE-ProRule" id="PRU00212"/>
    </source>
</evidence>
<evidence type="ECO:0000256" key="3">
    <source>
        <dbReference type="SAM" id="MobiDB-lite"/>
    </source>
</evidence>
<evidence type="ECO:0000269" key="4">
    <source>
    </source>
</evidence>
<evidence type="ECO:0000269" key="5">
    <source>
    </source>
</evidence>
<evidence type="ECO:0000269" key="6">
    <source>
    </source>
</evidence>
<evidence type="ECO:0000269" key="7">
    <source>
    </source>
</evidence>
<evidence type="ECO:0000269" key="8">
    <source>
    </source>
</evidence>
<evidence type="ECO:0000269" key="9">
    <source>
    </source>
</evidence>
<protein>
    <recommendedName>
        <fullName>Regulatory solute carrier protein family 1 member 1</fullName>
    </recommendedName>
    <alternativeName>
        <fullName>Transporter regulator RS1</fullName>
        <shortName>hRS1</shortName>
    </alternativeName>
</protein>
<name>RSCA1_HUMAN</name>
<feature type="chain" id="PRO_0000324150" description="Regulatory solute carrier protein family 1 member 1">
    <location>
        <begin position="1"/>
        <end position="617"/>
    </location>
</feature>
<feature type="domain" description="UBA" evidence="2">
    <location>
        <begin position="571"/>
        <end position="611"/>
    </location>
</feature>
<feature type="region of interest" description="Disordered" evidence="3">
    <location>
        <begin position="1"/>
        <end position="106"/>
    </location>
</feature>
<feature type="region of interest" description="Disordered" evidence="3">
    <location>
        <begin position="155"/>
        <end position="181"/>
    </location>
</feature>
<feature type="region of interest" description="Disordered" evidence="3">
    <location>
        <begin position="217"/>
        <end position="237"/>
    </location>
</feature>
<feature type="region of interest" description="Involved in post-transcriptional down-regulation of SLC5A1">
    <location>
        <begin position="410"/>
        <end position="412"/>
    </location>
</feature>
<feature type="compositionally biased region" description="Polar residues" evidence="3">
    <location>
        <begin position="1"/>
        <end position="22"/>
    </location>
</feature>
<feature type="compositionally biased region" description="Basic and acidic residues" evidence="3">
    <location>
        <begin position="43"/>
        <end position="52"/>
    </location>
</feature>
<feature type="compositionally biased region" description="Basic and acidic residues" evidence="3">
    <location>
        <begin position="66"/>
        <end position="83"/>
    </location>
</feature>
<feature type="compositionally biased region" description="Polar residues" evidence="3">
    <location>
        <begin position="89"/>
        <end position="103"/>
    </location>
</feature>
<feature type="compositionally biased region" description="Polar residues" evidence="3">
    <location>
        <begin position="155"/>
        <end position="165"/>
    </location>
</feature>
<feature type="sequence variant" id="VAR_039679" description="In dbSNP:rs3766163." evidence="4">
    <original>F</original>
    <variation>L</variation>
    <location>
        <position position="62"/>
    </location>
</feature>
<feature type="sequence variant" id="VAR_039680" description="In dbSNP:rs34091519.">
    <original>C</original>
    <variation>W</variation>
    <location>
        <position position="191"/>
    </location>
</feature>
<feature type="sequence variant" id="VAR_039681" description="In dbSNP:rs3738648.">
    <original>N</original>
    <variation>S</variation>
    <location>
        <position position="271"/>
    </location>
</feature>
<proteinExistence type="evidence at protein level"/>
<organism>
    <name type="scientific">Homo sapiens</name>
    <name type="common">Human</name>
    <dbReference type="NCBI Taxonomy" id="9606"/>
    <lineage>
        <taxon>Eukaryota</taxon>
        <taxon>Metazoa</taxon>
        <taxon>Chordata</taxon>
        <taxon>Craniata</taxon>
        <taxon>Vertebrata</taxon>
        <taxon>Euteleostomi</taxon>
        <taxon>Mammalia</taxon>
        <taxon>Eutheria</taxon>
        <taxon>Euarchontoglires</taxon>
        <taxon>Primates</taxon>
        <taxon>Haplorrhini</taxon>
        <taxon>Catarrhini</taxon>
        <taxon>Hominidae</taxon>
        <taxon>Homo</taxon>
    </lineage>
</organism>
<comment type="function">
    <text evidence="5 6 9">Mediates transcriptional and post-transcriptional regulation of SLC5A1. Inhibits a dynamin and PKC-dependent exocytotic pathway of SLC5A1. Also involved in transcriptional regulation of SLC22A2. Exhibits glucose-dependent, short-term inhibition of SLC5A1 and SLC22A2 by inhibiting the release of vesicles from the trans-Golgi network.</text>
</comment>
<comment type="subunit">
    <text evidence="1">Interacts with YRDC.</text>
</comment>
<comment type="interaction">
    <interactant intactId="EBI-3940171">
        <id>Q92681</id>
    </interactant>
    <interactant intactId="EBI-954531">
        <id>P54727</id>
        <label>RAD23B</label>
    </interactant>
    <organismsDiffer>false</organismsDiffer>
    <experiments>3</experiments>
</comment>
<comment type="subcellular location">
    <subcellularLocation>
        <location evidence="7">Cell membrane</location>
    </subcellularLocation>
    <subcellularLocation>
        <location evidence="7">Nucleus</location>
    </subcellularLocation>
    <subcellularLocation>
        <location evidence="7">Golgi apparatus</location>
        <location evidence="7">trans-Golgi network</location>
    </subcellularLocation>
    <text>Localizes at the inner side of the plasma membrane.</text>
</comment>
<comment type="tissue specificity">
    <text evidence="9">Expressed in small intestine, kidney and brain.</text>
</comment>
<comment type="domain">
    <text evidence="8">The tripeptides QCP and QSP mediate post-transcriptional down-regulation of SLC5A1 at the trans-Golgi network. They inhibit a monosaccharide-dependent exocytotic pathway of SLC5A1.</text>
</comment>